<proteinExistence type="inferred from homology"/>
<keyword id="KW-0255">Endonuclease</keyword>
<keyword id="KW-0378">Hydrolase</keyword>
<keyword id="KW-0540">Nuclease</keyword>
<keyword id="KW-1185">Reference proteome</keyword>
<keyword id="KW-0694">RNA-binding</keyword>
<keyword id="KW-0819">tRNA processing</keyword>
<protein>
    <recommendedName>
        <fullName evidence="1">Ribonuclease P protein component</fullName>
        <shortName evidence="1">RNase P protein</shortName>
        <shortName evidence="1">RNaseP protein</shortName>
        <ecNumber evidence="1">3.1.26.5</ecNumber>
    </recommendedName>
    <alternativeName>
        <fullName evidence="1">Protein C5</fullName>
    </alternativeName>
</protein>
<evidence type="ECO:0000255" key="1">
    <source>
        <dbReference type="HAMAP-Rule" id="MF_00227"/>
    </source>
</evidence>
<name>RNPA_MYCGE</name>
<dbReference type="EC" id="3.1.26.5" evidence="1"/>
<dbReference type="EMBL" id="L43967">
    <property type="protein sequence ID" value="AAC72485.1"/>
    <property type="molecule type" value="Genomic_DNA"/>
</dbReference>
<dbReference type="PIR" id="D64251">
    <property type="entry name" value="D64251"/>
</dbReference>
<dbReference type="SMR" id="P47703"/>
<dbReference type="FunCoup" id="P47703">
    <property type="interactions" value="92"/>
</dbReference>
<dbReference type="STRING" id="243273.MG_465"/>
<dbReference type="KEGG" id="mge:MG_465"/>
<dbReference type="eggNOG" id="COG0594">
    <property type="taxonomic scope" value="Bacteria"/>
</dbReference>
<dbReference type="HOGENOM" id="CLU_117179_7_0_14"/>
<dbReference type="InParanoid" id="P47703"/>
<dbReference type="BRENDA" id="3.1.26.5">
    <property type="organism ID" value="3528"/>
</dbReference>
<dbReference type="Proteomes" id="UP000000807">
    <property type="component" value="Chromosome"/>
</dbReference>
<dbReference type="GO" id="GO:0030677">
    <property type="term" value="C:ribonuclease P complex"/>
    <property type="evidence" value="ECO:0000318"/>
    <property type="project" value="GO_Central"/>
</dbReference>
<dbReference type="GO" id="GO:0042781">
    <property type="term" value="F:3'-tRNA processing endoribonuclease activity"/>
    <property type="evidence" value="ECO:0000318"/>
    <property type="project" value="GO_Central"/>
</dbReference>
<dbReference type="GO" id="GO:0004526">
    <property type="term" value="F:ribonuclease P activity"/>
    <property type="evidence" value="ECO:0000318"/>
    <property type="project" value="GO_Central"/>
</dbReference>
<dbReference type="GO" id="GO:0000049">
    <property type="term" value="F:tRNA binding"/>
    <property type="evidence" value="ECO:0007669"/>
    <property type="project" value="UniProtKB-UniRule"/>
</dbReference>
<dbReference type="GO" id="GO:0042780">
    <property type="term" value="P:tRNA 3'-end processing"/>
    <property type="evidence" value="ECO:0000318"/>
    <property type="project" value="GO_Central"/>
</dbReference>
<dbReference type="GO" id="GO:0001682">
    <property type="term" value="P:tRNA 5'-leader removal"/>
    <property type="evidence" value="ECO:0007669"/>
    <property type="project" value="UniProtKB-UniRule"/>
</dbReference>
<dbReference type="Gene3D" id="3.30.230.10">
    <property type="match status" value="1"/>
</dbReference>
<dbReference type="HAMAP" id="MF_00227">
    <property type="entry name" value="RNase_P"/>
    <property type="match status" value="1"/>
</dbReference>
<dbReference type="InterPro" id="IPR020568">
    <property type="entry name" value="Ribosomal_Su5_D2-typ_SF"/>
</dbReference>
<dbReference type="InterPro" id="IPR014721">
    <property type="entry name" value="Ribsml_uS5_D2-typ_fold_subgr"/>
</dbReference>
<dbReference type="InterPro" id="IPR000100">
    <property type="entry name" value="RNase_P"/>
</dbReference>
<dbReference type="InterPro" id="IPR020539">
    <property type="entry name" value="RNase_P_CS"/>
</dbReference>
<dbReference type="NCBIfam" id="TIGR00188">
    <property type="entry name" value="rnpA"/>
    <property type="match status" value="1"/>
</dbReference>
<dbReference type="PANTHER" id="PTHR33992">
    <property type="entry name" value="RIBONUCLEASE P PROTEIN COMPONENT"/>
    <property type="match status" value="1"/>
</dbReference>
<dbReference type="PANTHER" id="PTHR33992:SF1">
    <property type="entry name" value="RIBONUCLEASE P PROTEIN COMPONENT"/>
    <property type="match status" value="1"/>
</dbReference>
<dbReference type="Pfam" id="PF00825">
    <property type="entry name" value="Ribonuclease_P"/>
    <property type="match status" value="1"/>
</dbReference>
<dbReference type="SUPFAM" id="SSF54211">
    <property type="entry name" value="Ribosomal protein S5 domain 2-like"/>
    <property type="match status" value="1"/>
</dbReference>
<dbReference type="PROSITE" id="PS00648">
    <property type="entry name" value="RIBONUCLEASE_P"/>
    <property type="match status" value="1"/>
</dbReference>
<feature type="chain" id="PRO_0000198486" description="Ribonuclease P protein component">
    <location>
        <begin position="1"/>
        <end position="128"/>
    </location>
</feature>
<accession>P47703</accession>
<reference key="1">
    <citation type="journal article" date="1995" name="Science">
        <title>The minimal gene complement of Mycoplasma genitalium.</title>
        <authorList>
            <person name="Fraser C.M."/>
            <person name="Gocayne J.D."/>
            <person name="White O."/>
            <person name="Adams M.D."/>
            <person name="Clayton R.A."/>
            <person name="Fleischmann R.D."/>
            <person name="Bult C.J."/>
            <person name="Kerlavage A.R."/>
            <person name="Sutton G.G."/>
            <person name="Kelley J.M."/>
            <person name="Fritchman J.L."/>
            <person name="Weidman J.F."/>
            <person name="Small K.V."/>
            <person name="Sandusky M."/>
            <person name="Fuhrmann J.L."/>
            <person name="Nguyen D.T."/>
            <person name="Utterback T.R."/>
            <person name="Saudek D.M."/>
            <person name="Phillips C.A."/>
            <person name="Merrick J.M."/>
            <person name="Tomb J.-F."/>
            <person name="Dougherty B.A."/>
            <person name="Bott K.F."/>
            <person name="Hu P.-C."/>
            <person name="Lucier T.S."/>
            <person name="Peterson S.N."/>
            <person name="Smith H.O."/>
            <person name="Hutchison C.A. III"/>
            <person name="Venter J.C."/>
        </authorList>
    </citation>
    <scope>NUCLEOTIDE SEQUENCE [LARGE SCALE GENOMIC DNA]</scope>
    <source>
        <strain>ATCC 33530 / DSM 19775 / NCTC 10195 / G37</strain>
    </source>
</reference>
<gene>
    <name evidence="1" type="primary">rnpA</name>
    <name type="ordered locus">MG465</name>
</gene>
<organism>
    <name type="scientific">Mycoplasma genitalium (strain ATCC 33530 / DSM 19775 / NCTC 10195 / G37)</name>
    <name type="common">Mycoplasmoides genitalium</name>
    <dbReference type="NCBI Taxonomy" id="243273"/>
    <lineage>
        <taxon>Bacteria</taxon>
        <taxon>Bacillati</taxon>
        <taxon>Mycoplasmatota</taxon>
        <taxon>Mycoplasmoidales</taxon>
        <taxon>Mycoplasmoidaceae</taxon>
        <taxon>Mycoplasmoides</taxon>
    </lineage>
</organism>
<sequence length="128" mass="15178">MLNSRFPVSVKKSHSLRERKVFTTILQSKTRFFGTFINAYFIKNNHSTWRVAISIAKTKYKLAVQRNLIKRQIRSIFQQISNNLEPWDILVIVNKGFIELTFKEKQKLFLQLLKRIKEVDAYQTSANK</sequence>
<comment type="function">
    <text evidence="1">RNaseP catalyzes the removal of the 5'-leader sequence from pre-tRNA to produce the mature 5'-terminus. It can also cleave other RNA substrates such as 4.5S RNA. The protein component plays an auxiliary but essential role in vivo by binding to the 5'-leader sequence and broadening the substrate specificity of the ribozyme.</text>
</comment>
<comment type="catalytic activity">
    <reaction evidence="1">
        <text>Endonucleolytic cleavage of RNA, removing 5'-extranucleotides from tRNA precursor.</text>
        <dbReference type="EC" id="3.1.26.5"/>
    </reaction>
</comment>
<comment type="subunit">
    <text evidence="1">Consists of a catalytic RNA component (M1 or rnpB) and a protein subunit.</text>
</comment>
<comment type="similarity">
    <text evidence="1">Belongs to the RnpA family.</text>
</comment>